<protein>
    <recommendedName>
        <fullName evidence="2">Adenylosuccinate synthetase</fullName>
        <shortName evidence="2">AMPSase</shortName>
        <shortName evidence="2">AdSS</shortName>
        <ecNumber evidence="2">6.3.4.4</ecNumber>
    </recommendedName>
    <alternativeName>
        <fullName evidence="2">IMP--aspartate ligase</fullName>
    </alternativeName>
</protein>
<accession>C7GPD7</accession>
<dbReference type="EC" id="6.3.4.4" evidence="2"/>
<dbReference type="EMBL" id="ACFL01000082">
    <property type="protein sequence ID" value="EEU07355.1"/>
    <property type="molecule type" value="Genomic_DNA"/>
</dbReference>
<dbReference type="SMR" id="C7GPD7"/>
<dbReference type="UniPathway" id="UPA00075">
    <property type="reaction ID" value="UER00335"/>
</dbReference>
<dbReference type="Proteomes" id="UP000008073">
    <property type="component" value="Unassembled WGS sequence"/>
</dbReference>
<dbReference type="GO" id="GO:0005737">
    <property type="term" value="C:cytoplasm"/>
    <property type="evidence" value="ECO:0007669"/>
    <property type="project" value="UniProtKB-SubCell"/>
</dbReference>
<dbReference type="GO" id="GO:0004019">
    <property type="term" value="F:adenylosuccinate synthase activity"/>
    <property type="evidence" value="ECO:0007669"/>
    <property type="project" value="UniProtKB-UniRule"/>
</dbReference>
<dbReference type="GO" id="GO:0005525">
    <property type="term" value="F:GTP binding"/>
    <property type="evidence" value="ECO:0007669"/>
    <property type="project" value="UniProtKB-UniRule"/>
</dbReference>
<dbReference type="GO" id="GO:0000287">
    <property type="term" value="F:magnesium ion binding"/>
    <property type="evidence" value="ECO:0007669"/>
    <property type="project" value="UniProtKB-UniRule"/>
</dbReference>
<dbReference type="GO" id="GO:0044208">
    <property type="term" value="P:'de novo' AMP biosynthetic process"/>
    <property type="evidence" value="ECO:0007669"/>
    <property type="project" value="UniProtKB-UniRule"/>
</dbReference>
<dbReference type="GO" id="GO:0046040">
    <property type="term" value="P:IMP metabolic process"/>
    <property type="evidence" value="ECO:0007669"/>
    <property type="project" value="TreeGrafter"/>
</dbReference>
<dbReference type="CDD" id="cd03108">
    <property type="entry name" value="AdSS"/>
    <property type="match status" value="1"/>
</dbReference>
<dbReference type="FunFam" id="3.90.170.10:FF:000001">
    <property type="entry name" value="Adenylosuccinate synthetase"/>
    <property type="match status" value="1"/>
</dbReference>
<dbReference type="FunFam" id="1.10.300.10:FF:000002">
    <property type="entry name" value="Adenylosuccinate synthetase, chloroplastic"/>
    <property type="match status" value="1"/>
</dbReference>
<dbReference type="Gene3D" id="3.40.440.10">
    <property type="entry name" value="Adenylosuccinate Synthetase, subunit A, domain 1"/>
    <property type="match status" value="1"/>
</dbReference>
<dbReference type="Gene3D" id="1.10.300.10">
    <property type="entry name" value="Adenylosuccinate Synthetase, subunit A, domain 2"/>
    <property type="match status" value="1"/>
</dbReference>
<dbReference type="Gene3D" id="3.90.170.10">
    <property type="entry name" value="Adenylosuccinate Synthetase, subunit A, domain 3"/>
    <property type="match status" value="1"/>
</dbReference>
<dbReference type="HAMAP" id="MF_00011">
    <property type="entry name" value="Adenylosucc_synth"/>
    <property type="match status" value="1"/>
</dbReference>
<dbReference type="InterPro" id="IPR018220">
    <property type="entry name" value="Adenylosuccin_syn_GTP-bd"/>
</dbReference>
<dbReference type="InterPro" id="IPR033128">
    <property type="entry name" value="Adenylosuccin_syn_Lys_AS"/>
</dbReference>
<dbReference type="InterPro" id="IPR042109">
    <property type="entry name" value="Adenylosuccinate_synth_dom1"/>
</dbReference>
<dbReference type="InterPro" id="IPR042110">
    <property type="entry name" value="Adenylosuccinate_synth_dom2"/>
</dbReference>
<dbReference type="InterPro" id="IPR042111">
    <property type="entry name" value="Adenylosuccinate_synth_dom3"/>
</dbReference>
<dbReference type="InterPro" id="IPR001114">
    <property type="entry name" value="Adenylosuccinate_synthetase"/>
</dbReference>
<dbReference type="InterPro" id="IPR027417">
    <property type="entry name" value="P-loop_NTPase"/>
</dbReference>
<dbReference type="NCBIfam" id="NF002223">
    <property type="entry name" value="PRK01117.1"/>
    <property type="match status" value="1"/>
</dbReference>
<dbReference type="NCBIfam" id="TIGR00184">
    <property type="entry name" value="purA"/>
    <property type="match status" value="1"/>
</dbReference>
<dbReference type="PANTHER" id="PTHR11846">
    <property type="entry name" value="ADENYLOSUCCINATE SYNTHETASE"/>
    <property type="match status" value="1"/>
</dbReference>
<dbReference type="PANTHER" id="PTHR11846:SF0">
    <property type="entry name" value="ADENYLOSUCCINATE SYNTHETASE"/>
    <property type="match status" value="1"/>
</dbReference>
<dbReference type="Pfam" id="PF00709">
    <property type="entry name" value="Adenylsucc_synt"/>
    <property type="match status" value="1"/>
</dbReference>
<dbReference type="SMART" id="SM00788">
    <property type="entry name" value="Adenylsucc_synt"/>
    <property type="match status" value="1"/>
</dbReference>
<dbReference type="SUPFAM" id="SSF52540">
    <property type="entry name" value="P-loop containing nucleoside triphosphate hydrolases"/>
    <property type="match status" value="1"/>
</dbReference>
<dbReference type="PROSITE" id="PS01266">
    <property type="entry name" value="ADENYLOSUCCIN_SYN_1"/>
    <property type="match status" value="1"/>
</dbReference>
<dbReference type="PROSITE" id="PS00513">
    <property type="entry name" value="ADENYLOSUCCIN_SYN_2"/>
    <property type="match status" value="1"/>
</dbReference>
<reference key="1">
    <citation type="journal article" date="2009" name="Genome Res.">
        <title>Genome structure of a Saccharomyces cerevisiae strain widely used in bioethanol production.</title>
        <authorList>
            <person name="Argueso J.L."/>
            <person name="Carazzolle M.F."/>
            <person name="Mieczkowski P.A."/>
            <person name="Duarte F.M."/>
            <person name="Netto O.V.C."/>
            <person name="Missawa S.K."/>
            <person name="Galzerani F."/>
            <person name="Costa G.G.L."/>
            <person name="Vidal R.O."/>
            <person name="Noronha M.F."/>
            <person name="Dominska M."/>
            <person name="Andrietta M.G.S."/>
            <person name="Andrietta S.R."/>
            <person name="Cunha A.F."/>
            <person name="Gomes L.H."/>
            <person name="Tavares F.C.A."/>
            <person name="Alcarde A.R."/>
            <person name="Dietrich F.S."/>
            <person name="McCusker J.H."/>
            <person name="Petes T.D."/>
            <person name="Pereira G.A.G."/>
        </authorList>
    </citation>
    <scope>NUCLEOTIDE SEQUENCE [LARGE SCALE GENOMIC DNA]</scope>
    <source>
        <strain>JAY291</strain>
    </source>
</reference>
<proteinExistence type="inferred from homology"/>
<gene>
    <name evidence="2" type="primary">ADE12</name>
    <name type="ORF">C1Q_02127</name>
</gene>
<keyword id="KW-0963">Cytoplasm</keyword>
<keyword id="KW-0342">GTP-binding</keyword>
<keyword id="KW-0436">Ligase</keyword>
<keyword id="KW-0460">Magnesium</keyword>
<keyword id="KW-0479">Metal-binding</keyword>
<keyword id="KW-0547">Nucleotide-binding</keyword>
<keyword id="KW-0658">Purine biosynthesis</keyword>
<sequence>MVNVVLGSQWGDEGKGKLVDLLVGKYDIVARCAGGNNAGHTIVVDGVKYDFHMLPSGLVNPNCQNLLGNGVVIHVPSFFKELETLEAKGLKNARSRLFVSSRAHLVFDFHQVTDKLRELELSGRSKDGKNIGTTGKGIGPTYSTKASRSGLRVHHLVNDQPGAWEEFVARYKRLLETRRQRYGDFEYDFEAKLAEYKKLREQLKPFVVDSVVFMHNAIEAKKKILVEGANALMLDIDFGTYPYVTSSNTGIGGVLTGLGIPPRTIDEIYGVVKAYTTRVGEGPFPTEQLNENGEKLQTIGAEFGVTTGRKRRCGWLDLVVLKYSTLINGYTSLNITKLDVLDTFKEIPVGISYSIQGKKLDLFPEDLNILGKVEVEYKVLPGWDQDITKITKYEDLPENAKKYLKYIEDFVGVPVEWVGTGPARESMLHKEIK</sequence>
<comment type="function">
    <text evidence="1">Plays an important role in the de novo pathway and in the salvage pathway of purine nucleotide biosynthesis. Catalyzes the first committed step in the biosynthesis of AMP from IMP (By similarity).</text>
</comment>
<comment type="catalytic activity">
    <reaction evidence="2">
        <text>IMP + L-aspartate + GTP = N(6)-(1,2-dicarboxyethyl)-AMP + GDP + phosphate + 2 H(+)</text>
        <dbReference type="Rhea" id="RHEA:15753"/>
        <dbReference type="ChEBI" id="CHEBI:15378"/>
        <dbReference type="ChEBI" id="CHEBI:29991"/>
        <dbReference type="ChEBI" id="CHEBI:37565"/>
        <dbReference type="ChEBI" id="CHEBI:43474"/>
        <dbReference type="ChEBI" id="CHEBI:57567"/>
        <dbReference type="ChEBI" id="CHEBI:58053"/>
        <dbReference type="ChEBI" id="CHEBI:58189"/>
        <dbReference type="EC" id="6.3.4.4"/>
    </reaction>
</comment>
<comment type="cofactor">
    <cofactor evidence="2">
        <name>Mg(2+)</name>
        <dbReference type="ChEBI" id="CHEBI:18420"/>
    </cofactor>
    <text evidence="2">Binds 1 Mg(2+) ion per subunit.</text>
</comment>
<comment type="pathway">
    <text evidence="2">Purine metabolism; AMP biosynthesis via de novo pathway; AMP from IMP: step 1/2.</text>
</comment>
<comment type="subunit">
    <text evidence="2">Homodimer.</text>
</comment>
<comment type="subcellular location">
    <subcellularLocation>
        <location evidence="2">Cytoplasm</location>
    </subcellularLocation>
</comment>
<comment type="similarity">
    <text evidence="2">Belongs to the adenylosuccinate synthetase family.</text>
</comment>
<evidence type="ECO:0000250" key="1"/>
<evidence type="ECO:0000255" key="2">
    <source>
        <dbReference type="HAMAP-Rule" id="MF_03125"/>
    </source>
</evidence>
<organism>
    <name type="scientific">Saccharomyces cerevisiae (strain JAY291)</name>
    <name type="common">Baker's yeast</name>
    <dbReference type="NCBI Taxonomy" id="574961"/>
    <lineage>
        <taxon>Eukaryota</taxon>
        <taxon>Fungi</taxon>
        <taxon>Dikarya</taxon>
        <taxon>Ascomycota</taxon>
        <taxon>Saccharomycotina</taxon>
        <taxon>Saccharomycetes</taxon>
        <taxon>Saccharomycetales</taxon>
        <taxon>Saccharomycetaceae</taxon>
        <taxon>Saccharomyces</taxon>
    </lineage>
</organism>
<feature type="chain" id="PRO_0000399360" description="Adenylosuccinate synthetase">
    <location>
        <begin position="1"/>
        <end position="433"/>
    </location>
</feature>
<feature type="active site" description="Proton acceptor" evidence="2">
    <location>
        <position position="12"/>
    </location>
</feature>
<feature type="active site" description="Proton donor" evidence="2">
    <location>
        <position position="40"/>
    </location>
</feature>
<feature type="binding site" evidence="2">
    <location>
        <begin position="11"/>
        <end position="17"/>
    </location>
    <ligand>
        <name>GTP</name>
        <dbReference type="ChEBI" id="CHEBI:37565"/>
    </ligand>
</feature>
<feature type="binding site" description="in other chain" evidence="2">
    <location>
        <begin position="12"/>
        <end position="15"/>
    </location>
    <ligand>
        <name>IMP</name>
        <dbReference type="ChEBI" id="CHEBI:58053"/>
        <note>ligand shared between dimeric partners</note>
    </ligand>
</feature>
<feature type="binding site" evidence="2">
    <location>
        <position position="12"/>
    </location>
    <ligand>
        <name>Mg(2+)</name>
        <dbReference type="ChEBI" id="CHEBI:18420"/>
    </ligand>
</feature>
<feature type="binding site" description="in other chain" evidence="2">
    <location>
        <begin position="37"/>
        <end position="40"/>
    </location>
    <ligand>
        <name>IMP</name>
        <dbReference type="ChEBI" id="CHEBI:58053"/>
        <note>ligand shared between dimeric partners</note>
    </ligand>
</feature>
<feature type="binding site" evidence="2">
    <location>
        <begin position="39"/>
        <end position="41"/>
    </location>
    <ligand>
        <name>GTP</name>
        <dbReference type="ChEBI" id="CHEBI:37565"/>
    </ligand>
</feature>
<feature type="binding site" evidence="2">
    <location>
        <position position="39"/>
    </location>
    <ligand>
        <name>Mg(2+)</name>
        <dbReference type="ChEBI" id="CHEBI:18420"/>
    </ligand>
</feature>
<feature type="binding site" description="in other chain" evidence="2">
    <location>
        <position position="134"/>
    </location>
    <ligand>
        <name>IMP</name>
        <dbReference type="ChEBI" id="CHEBI:58053"/>
        <note>ligand shared between dimeric partners</note>
    </ligand>
</feature>
<feature type="binding site" evidence="2">
    <location>
        <position position="148"/>
    </location>
    <ligand>
        <name>IMP</name>
        <dbReference type="ChEBI" id="CHEBI:58053"/>
        <note>ligand shared between dimeric partners</note>
    </ligand>
</feature>
<feature type="binding site" description="in other chain" evidence="2">
    <location>
        <position position="230"/>
    </location>
    <ligand>
        <name>IMP</name>
        <dbReference type="ChEBI" id="CHEBI:58053"/>
        <note>ligand shared between dimeric partners</note>
    </ligand>
</feature>
<feature type="binding site" description="in other chain" evidence="2">
    <location>
        <position position="245"/>
    </location>
    <ligand>
        <name>IMP</name>
        <dbReference type="ChEBI" id="CHEBI:58053"/>
        <note>ligand shared between dimeric partners</note>
    </ligand>
</feature>
<feature type="binding site" evidence="2">
    <location>
        <begin position="305"/>
        <end position="311"/>
    </location>
    <ligand>
        <name>substrate</name>
    </ligand>
</feature>
<feature type="binding site" description="in other chain" evidence="2">
    <location>
        <position position="309"/>
    </location>
    <ligand>
        <name>IMP</name>
        <dbReference type="ChEBI" id="CHEBI:58053"/>
        <note>ligand shared between dimeric partners</note>
    </ligand>
</feature>
<feature type="binding site" evidence="2">
    <location>
        <position position="311"/>
    </location>
    <ligand>
        <name>GTP</name>
        <dbReference type="ChEBI" id="CHEBI:37565"/>
    </ligand>
</feature>
<feature type="binding site" evidence="2">
    <location>
        <begin position="337"/>
        <end position="339"/>
    </location>
    <ligand>
        <name>GTP</name>
        <dbReference type="ChEBI" id="CHEBI:37565"/>
    </ligand>
</feature>
<feature type="binding site" evidence="2">
    <location>
        <begin position="419"/>
        <end position="421"/>
    </location>
    <ligand>
        <name>GTP</name>
        <dbReference type="ChEBI" id="CHEBI:37565"/>
    </ligand>
</feature>
<name>PURA_YEAS2</name>